<name>SYLB_AQUAE</name>
<organism>
    <name type="scientific">Aquifex aeolicus (strain VF5)</name>
    <dbReference type="NCBI Taxonomy" id="224324"/>
    <lineage>
        <taxon>Bacteria</taxon>
        <taxon>Pseudomonadati</taxon>
        <taxon>Aquificota</taxon>
        <taxon>Aquificia</taxon>
        <taxon>Aquificales</taxon>
        <taxon>Aquificaceae</taxon>
        <taxon>Aquifex</taxon>
    </lineage>
</organism>
<accession>O67646</accession>
<feature type="chain" id="PRO_0000151963" description="Leucine--tRNA ligase subunit beta">
    <location>
        <begin position="1"/>
        <end position="289"/>
    </location>
</feature>
<feature type="short sequence motif" description="'KMSKS' region">
    <location>
        <begin position="45"/>
        <end position="49"/>
    </location>
</feature>
<feature type="binding site" evidence="1">
    <location>
        <position position="48"/>
    </location>
    <ligand>
        <name>ATP</name>
        <dbReference type="ChEBI" id="CHEBI:30616"/>
    </ligand>
</feature>
<reference key="1">
    <citation type="journal article" date="1998" name="Nature">
        <title>The complete genome of the hyperthermophilic bacterium Aquifex aeolicus.</title>
        <authorList>
            <person name="Deckert G."/>
            <person name="Warren P.V."/>
            <person name="Gaasterland T."/>
            <person name="Young W.G."/>
            <person name="Lenox A.L."/>
            <person name="Graham D.E."/>
            <person name="Overbeek R."/>
            <person name="Snead M.A."/>
            <person name="Keller M."/>
            <person name="Aujay M."/>
            <person name="Huber R."/>
            <person name="Feldman R.A."/>
            <person name="Short J.M."/>
            <person name="Olsen G.J."/>
            <person name="Swanson R.V."/>
        </authorList>
    </citation>
    <scope>NUCLEOTIDE SEQUENCE [LARGE SCALE GENOMIC DNA]</scope>
    <source>
        <strain>VF5</strain>
    </source>
</reference>
<proteinExistence type="inferred from homology"/>
<protein>
    <recommendedName>
        <fullName>Leucine--tRNA ligase subunit beta</fullName>
        <ecNumber>6.1.1.4</ecNumber>
    </recommendedName>
    <alternativeName>
        <fullName>Leucyl-tRNA synthetase subunit beta</fullName>
        <shortName>LeuRS</shortName>
    </alternativeName>
</protein>
<sequence length="289" mass="33536">MKIKDFLQENKISVGDNAIFLLEKLGIKDENLIKFLEREIGESAKMSKSKANVVDPEEAVEKYGADTVRLYILFAAPPEQDFEWTDEGIQGAYRFLQRYWNFVNKHLEKIKNLTYTVEELRNVQGKAKEVRREIHQTIADYRRDFEERYQFNTAIAKIMKLLNTLQDFSPQTEQDYKVLREGIETITLLLSPITPHIAEEVWEMLGNEGFIINQPIPEPDPEALKVEEIEIPVQVNGKLRARVKVPADADEETVKNIVLSDERVQKWVQGKEVKKFIYVKGKLVNVVVK</sequence>
<dbReference type="EC" id="6.1.1.4"/>
<dbReference type="EMBL" id="AE000657">
    <property type="protein sequence ID" value="AAC07608.1"/>
    <property type="molecule type" value="Genomic_DNA"/>
</dbReference>
<dbReference type="PIR" id="D70452">
    <property type="entry name" value="D70452"/>
</dbReference>
<dbReference type="RefSeq" id="NP_214212.1">
    <property type="nucleotide sequence ID" value="NC_000918.1"/>
</dbReference>
<dbReference type="RefSeq" id="WP_010881149.1">
    <property type="nucleotide sequence ID" value="NC_000918.1"/>
</dbReference>
<dbReference type="SMR" id="O67646"/>
<dbReference type="STRING" id="224324.aq_1770"/>
<dbReference type="EnsemblBacteria" id="AAC07608">
    <property type="protein sequence ID" value="AAC07608"/>
    <property type="gene ID" value="aq_1770"/>
</dbReference>
<dbReference type="KEGG" id="aae:aq_1770"/>
<dbReference type="PATRIC" id="fig|224324.8.peg.1366"/>
<dbReference type="eggNOG" id="COG0495">
    <property type="taxonomic scope" value="Bacteria"/>
</dbReference>
<dbReference type="HOGENOM" id="CLU_004427_1_1_0"/>
<dbReference type="InParanoid" id="O67646"/>
<dbReference type="OrthoDB" id="9810365at2"/>
<dbReference type="BRENDA" id="6.1.1.4">
    <property type="organism ID" value="396"/>
</dbReference>
<dbReference type="Proteomes" id="UP000000798">
    <property type="component" value="Chromosome"/>
</dbReference>
<dbReference type="GO" id="GO:0005737">
    <property type="term" value="C:cytoplasm"/>
    <property type="evidence" value="ECO:0007669"/>
    <property type="project" value="UniProtKB-SubCell"/>
</dbReference>
<dbReference type="GO" id="GO:0005524">
    <property type="term" value="F:ATP binding"/>
    <property type="evidence" value="ECO:0007669"/>
    <property type="project" value="UniProtKB-KW"/>
</dbReference>
<dbReference type="GO" id="GO:0004823">
    <property type="term" value="F:leucine-tRNA ligase activity"/>
    <property type="evidence" value="ECO:0007669"/>
    <property type="project" value="UniProtKB-EC"/>
</dbReference>
<dbReference type="GO" id="GO:0006429">
    <property type="term" value="P:leucyl-tRNA aminoacylation"/>
    <property type="evidence" value="ECO:0007669"/>
    <property type="project" value="InterPro"/>
</dbReference>
<dbReference type="CDD" id="cd07958">
    <property type="entry name" value="Anticodon_Ia_Leu_BEm"/>
    <property type="match status" value="1"/>
</dbReference>
<dbReference type="FunFam" id="1.10.730.10:FF:000011">
    <property type="entry name" value="Leucine--tRNA ligase chloroplastic/mitochondrial"/>
    <property type="match status" value="1"/>
</dbReference>
<dbReference type="Gene3D" id="1.10.730.10">
    <property type="entry name" value="Isoleucyl-tRNA Synthetase, Domain 1"/>
    <property type="match status" value="1"/>
</dbReference>
<dbReference type="InterPro" id="IPR002300">
    <property type="entry name" value="aa-tRNA-synth_Ia"/>
</dbReference>
<dbReference type="InterPro" id="IPR002302">
    <property type="entry name" value="Leu-tRNA-ligase"/>
</dbReference>
<dbReference type="InterPro" id="IPR013155">
    <property type="entry name" value="M/V/L/I-tRNA-synth_anticd-bd"/>
</dbReference>
<dbReference type="InterPro" id="IPR009080">
    <property type="entry name" value="tRNAsynth_Ia_anticodon-bd"/>
</dbReference>
<dbReference type="PANTHER" id="PTHR43740:SF2">
    <property type="entry name" value="LEUCINE--TRNA LIGASE, MITOCHONDRIAL"/>
    <property type="match status" value="1"/>
</dbReference>
<dbReference type="PANTHER" id="PTHR43740">
    <property type="entry name" value="LEUCYL-TRNA SYNTHETASE"/>
    <property type="match status" value="1"/>
</dbReference>
<dbReference type="Pfam" id="PF08264">
    <property type="entry name" value="Anticodon_1"/>
    <property type="match status" value="1"/>
</dbReference>
<dbReference type="Pfam" id="PF00133">
    <property type="entry name" value="tRNA-synt_1"/>
    <property type="match status" value="1"/>
</dbReference>
<dbReference type="SUPFAM" id="SSF47323">
    <property type="entry name" value="Anticodon-binding domain of a subclass of class I aminoacyl-tRNA synthetases"/>
    <property type="match status" value="1"/>
</dbReference>
<dbReference type="SUPFAM" id="SSF52374">
    <property type="entry name" value="Nucleotidylyl transferase"/>
    <property type="match status" value="1"/>
</dbReference>
<comment type="catalytic activity">
    <reaction>
        <text>tRNA(Leu) + L-leucine + ATP = L-leucyl-tRNA(Leu) + AMP + diphosphate</text>
        <dbReference type="Rhea" id="RHEA:11688"/>
        <dbReference type="Rhea" id="RHEA-COMP:9613"/>
        <dbReference type="Rhea" id="RHEA-COMP:9622"/>
        <dbReference type="ChEBI" id="CHEBI:30616"/>
        <dbReference type="ChEBI" id="CHEBI:33019"/>
        <dbReference type="ChEBI" id="CHEBI:57427"/>
        <dbReference type="ChEBI" id="CHEBI:78442"/>
        <dbReference type="ChEBI" id="CHEBI:78494"/>
        <dbReference type="ChEBI" id="CHEBI:456215"/>
        <dbReference type="EC" id="6.1.1.4"/>
    </reaction>
</comment>
<comment type="subunit">
    <text>Seems to consist of an alpha chain and a beta chain.</text>
</comment>
<comment type="subcellular location">
    <subcellularLocation>
        <location evidence="1">Cytoplasm</location>
    </subcellularLocation>
</comment>
<comment type="similarity">
    <text evidence="2">Belongs to the class-I aminoacyl-tRNA synthetase family.</text>
</comment>
<gene>
    <name type="primary">leuS'</name>
    <name type="ordered locus">aq_1770</name>
</gene>
<evidence type="ECO:0000250" key="1"/>
<evidence type="ECO:0000305" key="2"/>
<keyword id="KW-0030">Aminoacyl-tRNA synthetase</keyword>
<keyword id="KW-0067">ATP-binding</keyword>
<keyword id="KW-0963">Cytoplasm</keyword>
<keyword id="KW-0436">Ligase</keyword>
<keyword id="KW-0547">Nucleotide-binding</keyword>
<keyword id="KW-0648">Protein biosynthesis</keyword>
<keyword id="KW-1185">Reference proteome</keyword>